<evidence type="ECO:0000255" key="1">
    <source>
        <dbReference type="HAMAP-Rule" id="MF_00260"/>
    </source>
</evidence>
<gene>
    <name evidence="1" type="primary">hemC</name>
    <name type="ordered locus">YE0187</name>
</gene>
<accession>A1JI86</accession>
<organism>
    <name type="scientific">Yersinia enterocolitica serotype O:8 / biotype 1B (strain NCTC 13174 / 8081)</name>
    <dbReference type="NCBI Taxonomy" id="393305"/>
    <lineage>
        <taxon>Bacteria</taxon>
        <taxon>Pseudomonadati</taxon>
        <taxon>Pseudomonadota</taxon>
        <taxon>Gammaproteobacteria</taxon>
        <taxon>Enterobacterales</taxon>
        <taxon>Yersiniaceae</taxon>
        <taxon>Yersinia</taxon>
    </lineage>
</organism>
<comment type="function">
    <text evidence="1">Tetrapolymerization of the monopyrrole PBG into the hydroxymethylbilane pre-uroporphyrinogen in several discrete steps.</text>
</comment>
<comment type="catalytic activity">
    <reaction evidence="1">
        <text>4 porphobilinogen + H2O = hydroxymethylbilane + 4 NH4(+)</text>
        <dbReference type="Rhea" id="RHEA:13185"/>
        <dbReference type="ChEBI" id="CHEBI:15377"/>
        <dbReference type="ChEBI" id="CHEBI:28938"/>
        <dbReference type="ChEBI" id="CHEBI:57845"/>
        <dbReference type="ChEBI" id="CHEBI:58126"/>
        <dbReference type="EC" id="2.5.1.61"/>
    </reaction>
</comment>
<comment type="cofactor">
    <cofactor evidence="1">
        <name>dipyrromethane</name>
        <dbReference type="ChEBI" id="CHEBI:60342"/>
    </cofactor>
    <text evidence="1">Binds 1 dipyrromethane group covalently.</text>
</comment>
<comment type="pathway">
    <text evidence="1">Porphyrin-containing compound metabolism; protoporphyrin-IX biosynthesis; coproporphyrinogen-III from 5-aminolevulinate: step 2/4.</text>
</comment>
<comment type="subunit">
    <text evidence="1">Monomer.</text>
</comment>
<comment type="miscellaneous">
    <text evidence="1">The porphobilinogen subunits are added to the dipyrromethane group.</text>
</comment>
<comment type="similarity">
    <text evidence="1">Belongs to the HMBS family.</text>
</comment>
<protein>
    <recommendedName>
        <fullName evidence="1">Porphobilinogen deaminase</fullName>
        <shortName evidence="1">PBG</shortName>
        <ecNumber evidence="1">2.5.1.61</ecNumber>
    </recommendedName>
    <alternativeName>
        <fullName evidence="1">Hydroxymethylbilane synthase</fullName>
        <shortName evidence="1">HMBS</shortName>
    </alternativeName>
    <alternativeName>
        <fullName evidence="1">Pre-uroporphyrinogen synthase</fullName>
    </alternativeName>
</protein>
<sequence>MLDKIIRIATRQSPLALWQAHYVQHLLQANHPGLQVELVPMVTRGDIILDTPLAKVGGKGLFVKELELALLEGRADIAVHSMKDVPIAFPEGLGLVTICERDDPRDAFVSINYAHLDELPAGSIVGTSSLRRQCQLRERRPDLIIRDLRGNVGTRLAKLDKGEYHAIILAVAGLKRLGLETRIRYAMPAEESLPAVGQGAVGIECRLDDNFTRQLLAPLNHRETELRVCAERAMNTRLEGGCQVPIGSYAELDGDTLWLRALVGAPDGSEIIRGERRGPAENAEQMGVELADELLSRGAREILAEVYQDNPPL</sequence>
<feature type="chain" id="PRO_0000304296" description="Porphobilinogen deaminase">
    <location>
        <begin position="1"/>
        <end position="313"/>
    </location>
</feature>
<feature type="modified residue" description="S-(dipyrrolylmethanemethyl)cysteine" evidence="1">
    <location>
        <position position="242"/>
    </location>
</feature>
<reference key="1">
    <citation type="journal article" date="2006" name="PLoS Genet.">
        <title>The complete genome sequence and comparative genome analysis of the high pathogenicity Yersinia enterocolitica strain 8081.</title>
        <authorList>
            <person name="Thomson N.R."/>
            <person name="Howard S."/>
            <person name="Wren B.W."/>
            <person name="Holden M.T.G."/>
            <person name="Crossman L."/>
            <person name="Challis G.L."/>
            <person name="Churcher C."/>
            <person name="Mungall K."/>
            <person name="Brooks K."/>
            <person name="Chillingworth T."/>
            <person name="Feltwell T."/>
            <person name="Abdellah Z."/>
            <person name="Hauser H."/>
            <person name="Jagels K."/>
            <person name="Maddison M."/>
            <person name="Moule S."/>
            <person name="Sanders M."/>
            <person name="Whitehead S."/>
            <person name="Quail M.A."/>
            <person name="Dougan G."/>
            <person name="Parkhill J."/>
            <person name="Prentice M.B."/>
        </authorList>
    </citation>
    <scope>NUCLEOTIDE SEQUENCE [LARGE SCALE GENOMIC DNA]</scope>
    <source>
        <strain>NCTC 13174 / 8081</strain>
    </source>
</reference>
<dbReference type="EC" id="2.5.1.61" evidence="1"/>
<dbReference type="EMBL" id="AM286415">
    <property type="protein sequence ID" value="CAL10324.1"/>
    <property type="molecule type" value="Genomic_DNA"/>
</dbReference>
<dbReference type="RefSeq" id="WP_005166104.1">
    <property type="nucleotide sequence ID" value="NC_008800.1"/>
</dbReference>
<dbReference type="RefSeq" id="YP_001004576.1">
    <property type="nucleotide sequence ID" value="NC_008800.1"/>
</dbReference>
<dbReference type="SMR" id="A1JI86"/>
<dbReference type="GeneID" id="31411329"/>
<dbReference type="KEGG" id="yen:YE0187"/>
<dbReference type="PATRIC" id="fig|393305.7.peg.277"/>
<dbReference type="eggNOG" id="COG0181">
    <property type="taxonomic scope" value="Bacteria"/>
</dbReference>
<dbReference type="HOGENOM" id="CLU_019704_0_2_6"/>
<dbReference type="OrthoDB" id="9810298at2"/>
<dbReference type="UniPathway" id="UPA00251">
    <property type="reaction ID" value="UER00319"/>
</dbReference>
<dbReference type="Proteomes" id="UP000000642">
    <property type="component" value="Chromosome"/>
</dbReference>
<dbReference type="GO" id="GO:0005737">
    <property type="term" value="C:cytoplasm"/>
    <property type="evidence" value="ECO:0007669"/>
    <property type="project" value="TreeGrafter"/>
</dbReference>
<dbReference type="GO" id="GO:0004418">
    <property type="term" value="F:hydroxymethylbilane synthase activity"/>
    <property type="evidence" value="ECO:0007669"/>
    <property type="project" value="UniProtKB-UniRule"/>
</dbReference>
<dbReference type="GO" id="GO:0006782">
    <property type="term" value="P:protoporphyrinogen IX biosynthetic process"/>
    <property type="evidence" value="ECO:0007669"/>
    <property type="project" value="UniProtKB-UniRule"/>
</dbReference>
<dbReference type="CDD" id="cd13646">
    <property type="entry name" value="PBP2_EcHMBS_like"/>
    <property type="match status" value="1"/>
</dbReference>
<dbReference type="FunFam" id="3.30.160.40:FF:000002">
    <property type="entry name" value="Porphobilinogen deaminase"/>
    <property type="match status" value="1"/>
</dbReference>
<dbReference type="FunFam" id="3.40.190.10:FF:000004">
    <property type="entry name" value="Porphobilinogen deaminase"/>
    <property type="match status" value="1"/>
</dbReference>
<dbReference type="FunFam" id="3.40.190.10:FF:000005">
    <property type="entry name" value="Porphobilinogen deaminase"/>
    <property type="match status" value="1"/>
</dbReference>
<dbReference type="Gene3D" id="3.40.190.10">
    <property type="entry name" value="Periplasmic binding protein-like II"/>
    <property type="match status" value="2"/>
</dbReference>
<dbReference type="Gene3D" id="3.30.160.40">
    <property type="entry name" value="Porphobilinogen deaminase, C-terminal domain"/>
    <property type="match status" value="1"/>
</dbReference>
<dbReference type="HAMAP" id="MF_00260">
    <property type="entry name" value="Porphobil_deam"/>
    <property type="match status" value="1"/>
</dbReference>
<dbReference type="InterPro" id="IPR000860">
    <property type="entry name" value="HemC"/>
</dbReference>
<dbReference type="InterPro" id="IPR022419">
    <property type="entry name" value="Porphobilin_deaminase_cofac_BS"/>
</dbReference>
<dbReference type="InterPro" id="IPR022417">
    <property type="entry name" value="Porphobilin_deaminase_N"/>
</dbReference>
<dbReference type="InterPro" id="IPR022418">
    <property type="entry name" value="Porphobilinogen_deaminase_C"/>
</dbReference>
<dbReference type="InterPro" id="IPR036803">
    <property type="entry name" value="Porphobilinogen_deaminase_C_sf"/>
</dbReference>
<dbReference type="NCBIfam" id="TIGR00212">
    <property type="entry name" value="hemC"/>
    <property type="match status" value="1"/>
</dbReference>
<dbReference type="PANTHER" id="PTHR11557">
    <property type="entry name" value="PORPHOBILINOGEN DEAMINASE"/>
    <property type="match status" value="1"/>
</dbReference>
<dbReference type="PANTHER" id="PTHR11557:SF0">
    <property type="entry name" value="PORPHOBILINOGEN DEAMINASE"/>
    <property type="match status" value="1"/>
</dbReference>
<dbReference type="Pfam" id="PF01379">
    <property type="entry name" value="Porphobil_deam"/>
    <property type="match status" value="1"/>
</dbReference>
<dbReference type="Pfam" id="PF03900">
    <property type="entry name" value="Porphobil_deamC"/>
    <property type="match status" value="1"/>
</dbReference>
<dbReference type="PIRSF" id="PIRSF001438">
    <property type="entry name" value="4pyrrol_synth_OHMeBilane_synth"/>
    <property type="match status" value="1"/>
</dbReference>
<dbReference type="PRINTS" id="PR00151">
    <property type="entry name" value="PORPHBDMNASE"/>
</dbReference>
<dbReference type="SUPFAM" id="SSF53850">
    <property type="entry name" value="Periplasmic binding protein-like II"/>
    <property type="match status" value="1"/>
</dbReference>
<dbReference type="SUPFAM" id="SSF54782">
    <property type="entry name" value="Porphobilinogen deaminase (hydroxymethylbilane synthase), C-terminal domain"/>
    <property type="match status" value="1"/>
</dbReference>
<dbReference type="PROSITE" id="PS00533">
    <property type="entry name" value="PORPHOBILINOGEN_DEAM"/>
    <property type="match status" value="1"/>
</dbReference>
<keyword id="KW-0627">Porphyrin biosynthesis</keyword>
<keyword id="KW-0808">Transferase</keyword>
<name>HEM3_YERE8</name>
<proteinExistence type="inferred from homology"/>